<sequence>MSEIVKFNPVMASGFGAYIDHRDFLEAKTETIKNLLMRQGFVVVKNLDIDSDTFRDIYSAYGTIVEYADEKIGVGFGYRDTLKLEGEKGKIVTGRGQLPFHADGGLLLSQVDQVFLYAAEIKNVKFRGATTVCDHALACQEMPAHLLRVLEEETFEVRVLERGYYVDVSPDGWFKVPVFTDLGWVRKMLIYFPFDEGQPASWEPRIVGFTDHETQAFFQELGAFLKQPRYYYKHFWEDGDLLIMDNRRVIHEREEFNDDDIVRRLYRGQTADI</sequence>
<reference key="1">
    <citation type="journal article" date="1997" name="Mol. Microbiol.">
        <title>Analysis of the carbapenem gene cluster of Erwinia carotovora: definition of the antibiotic biosynthetic genes and evidence for a novel beta-lactam resistance mechanism.</title>
        <authorList>
            <person name="McGowan S.J."/>
            <person name="Sebaihia M."/>
            <person name="O'Leary S."/>
            <person name="Hardie K.R."/>
            <person name="Williams P."/>
            <person name="Stewart G.S."/>
            <person name="Bycroft B.W."/>
            <person name="Salmond G.P."/>
        </authorList>
    </citation>
    <scope>NUCLEOTIDE SEQUENCE [GENOMIC DNA]</scope>
    <scope>FUNCTION</scope>
    <scope>SUBCELLULAR LOCATION</scope>
    <source>
        <strain>ATCC 39048 / GS101</strain>
    </source>
</reference>
<reference key="2">
    <citation type="journal article" date="2003" name="J. Am. Chem. Soc.">
        <title>Carbapenem biosynthesis: confirmation of stereochemical assignments and the role of CarC in the ring stereoinversion process from L-proline.</title>
        <authorList>
            <person name="Stapon A."/>
            <person name="Li R."/>
            <person name="Townsend C.A."/>
        </authorList>
    </citation>
    <scope>FUNCTION</scope>
    <scope>CATALYTIC ACTIVITY</scope>
</reference>
<reference key="3">
    <citation type="journal article" date="2004" name="ChemBioChem">
        <title>Biosynthesis of carbapenem antibiotics: new carbapenam substrates for carbapenem synthase (CarC).</title>
        <authorList>
            <person name="Sleeman M.C."/>
            <person name="Smith P."/>
            <person name="Kellam B."/>
            <person name="Chhabra S.R."/>
            <person name="Bycroft B.W."/>
            <person name="Schofield C.J."/>
        </authorList>
    </citation>
    <scope>FUNCTION</scope>
    <scope>COFACTOR</scope>
    <scope>CATALYTIC ACTIVITY</scope>
</reference>
<reference key="4">
    <citation type="journal article" date="2003" name="J. Biol. Chem.">
        <title>Crystal structure of carbapenem synthase (CarC).</title>
        <authorList>
            <person name="Clifton I.J."/>
            <person name="Doan L.X."/>
            <person name="Sleeman M.C."/>
            <person name="Topf M."/>
            <person name="Suzuki H."/>
            <person name="Wilmouth R.C."/>
            <person name="Schofield C.J."/>
        </authorList>
    </citation>
    <scope>X-RAY CRYSTALLOGRAPHY (2.30 ANGSTROMS) IN COMPLEX WITH IRON; N-ACETYLPROLINE AND 2-OXOGLUTARATE</scope>
    <scope>CATALYTIC ACTIVITY</scope>
    <scope>FUNCTION</scope>
    <scope>SUBUNIT</scope>
    <scope>ACTIVITY REGULATION</scope>
    <scope>COFACTOR</scope>
</reference>
<keyword id="KW-0002">3D-structure</keyword>
<keyword id="KW-0045">Antibiotic biosynthesis</keyword>
<keyword id="KW-0963">Cytoplasm</keyword>
<keyword id="KW-0223">Dioxygenase</keyword>
<keyword id="KW-0408">Iron</keyword>
<keyword id="KW-0479">Metal-binding</keyword>
<keyword id="KW-0560">Oxidoreductase</keyword>
<organism>
    <name type="scientific">Pectobacterium carotovorum subsp. carotovorum</name>
    <name type="common">Erwinia carotovora subsp. carotovora</name>
    <dbReference type="NCBI Taxonomy" id="555"/>
    <lineage>
        <taxon>Bacteria</taxon>
        <taxon>Pseudomonadati</taxon>
        <taxon>Pseudomonadota</taxon>
        <taxon>Gammaproteobacteria</taxon>
        <taxon>Enterobacterales</taxon>
        <taxon>Pectobacteriaceae</taxon>
        <taxon>Pectobacterium</taxon>
    </lineage>
</organism>
<name>CARC_PECCC</name>
<accession>Q9XB59</accession>
<proteinExistence type="evidence at protein level"/>
<dbReference type="EC" id="1.14.20.3"/>
<dbReference type="EMBL" id="U17224">
    <property type="protein sequence ID" value="AAD38231.1"/>
    <property type="molecule type" value="Genomic_DNA"/>
</dbReference>
<dbReference type="RefSeq" id="WP_039277159.1">
    <property type="nucleotide sequence ID" value="NZ_QHMC01000009.1"/>
</dbReference>
<dbReference type="PDB" id="1NX4">
    <property type="method" value="X-ray"/>
    <property type="resolution" value="2.40 A"/>
    <property type="chains" value="A/B/C=1-273"/>
</dbReference>
<dbReference type="PDB" id="1NX8">
    <property type="method" value="X-ray"/>
    <property type="resolution" value="2.30 A"/>
    <property type="chains" value="A/B/C=1-273"/>
</dbReference>
<dbReference type="PDB" id="4OJ8">
    <property type="method" value="X-ray"/>
    <property type="resolution" value="2.10 A"/>
    <property type="chains" value="A/B/C=1-273"/>
</dbReference>
<dbReference type="PDBsum" id="1NX4"/>
<dbReference type="PDBsum" id="1NX8"/>
<dbReference type="PDBsum" id="4OJ8"/>
<dbReference type="SMR" id="Q9XB59"/>
<dbReference type="DrugBank" id="DB03360">
    <property type="generic name" value="N-Acetylproline"/>
</dbReference>
<dbReference type="BioCyc" id="MetaCyc:MONOMER-13573"/>
<dbReference type="BRENDA" id="1.14.20.3">
    <property type="organism ID" value="2140"/>
</dbReference>
<dbReference type="EvolutionaryTrace" id="Q9XB59"/>
<dbReference type="GO" id="GO:0005737">
    <property type="term" value="C:cytoplasm"/>
    <property type="evidence" value="ECO:0007669"/>
    <property type="project" value="UniProtKB-SubCell"/>
</dbReference>
<dbReference type="GO" id="GO:0051213">
    <property type="term" value="F:dioxygenase activity"/>
    <property type="evidence" value="ECO:0007669"/>
    <property type="project" value="UniProtKB-KW"/>
</dbReference>
<dbReference type="GO" id="GO:0046872">
    <property type="term" value="F:metal ion binding"/>
    <property type="evidence" value="ECO:0007669"/>
    <property type="project" value="UniProtKB-KW"/>
</dbReference>
<dbReference type="GO" id="GO:0017000">
    <property type="term" value="P:antibiotic biosynthetic process"/>
    <property type="evidence" value="ECO:0007669"/>
    <property type="project" value="UniProtKB-KW"/>
</dbReference>
<dbReference type="Gene3D" id="3.60.130.10">
    <property type="entry name" value="Clavaminate synthase-like"/>
    <property type="match status" value="1"/>
</dbReference>
<dbReference type="InterPro" id="IPR050411">
    <property type="entry name" value="AlphaKG_dependent_hydroxylases"/>
</dbReference>
<dbReference type="InterPro" id="IPR042098">
    <property type="entry name" value="TauD-like_sf"/>
</dbReference>
<dbReference type="InterPro" id="IPR003819">
    <property type="entry name" value="TauD/TfdA-like"/>
</dbReference>
<dbReference type="PANTHER" id="PTHR10696">
    <property type="entry name" value="GAMMA-BUTYROBETAINE HYDROXYLASE-RELATED"/>
    <property type="match status" value="1"/>
</dbReference>
<dbReference type="PANTHER" id="PTHR10696:SF56">
    <property type="entry name" value="TAUD_TFDA-LIKE DOMAIN-CONTAINING PROTEIN"/>
    <property type="match status" value="1"/>
</dbReference>
<dbReference type="Pfam" id="PF02668">
    <property type="entry name" value="TauD"/>
    <property type="match status" value="1"/>
</dbReference>
<dbReference type="SUPFAM" id="SSF51197">
    <property type="entry name" value="Clavaminate synthase-like"/>
    <property type="match status" value="1"/>
</dbReference>
<evidence type="ECO:0000255" key="1"/>
<evidence type="ECO:0000269" key="2">
    <source>
    </source>
</evidence>
<evidence type="ECO:0000269" key="3">
    <source>
    </source>
</evidence>
<evidence type="ECO:0000269" key="4">
    <source>
    </source>
</evidence>
<evidence type="ECO:0000269" key="5">
    <source>
    </source>
</evidence>
<evidence type="ECO:0000305" key="6"/>
<evidence type="ECO:0007829" key="7">
    <source>
        <dbReference type="PDB" id="4OJ8"/>
    </source>
</evidence>
<comment type="function">
    <text evidence="2 3 4 5">Catalyzes the Fe(2+) and alpha-ketoglutarate-dependent conversion of (3S,5S)-carbapenam to (5R)-carbapenem, an essential step in carbapenem antibiotic biosynthesis.</text>
</comment>
<comment type="catalytic activity">
    <reaction evidence="2 3 4">
        <text>(3S,5S)-carbapenam-3-caboxylate + 2-oxoglutarate + O2 = (5R)-carbapenem-3-carboxylate + succinate + CO2 + H2O</text>
        <dbReference type="Rhea" id="RHEA:36611"/>
        <dbReference type="ChEBI" id="CHEBI:15377"/>
        <dbReference type="ChEBI" id="CHEBI:15379"/>
        <dbReference type="ChEBI" id="CHEBI:16526"/>
        <dbReference type="ChEBI" id="CHEBI:16810"/>
        <dbReference type="ChEBI" id="CHEBI:30031"/>
        <dbReference type="ChEBI" id="CHEBI:73939"/>
        <dbReference type="ChEBI" id="CHEBI:73943"/>
        <dbReference type="EC" id="1.14.20.3"/>
    </reaction>
</comment>
<comment type="cofactor">
    <cofactor evidence="2 4">
        <name>Fe(2+)</name>
        <dbReference type="ChEBI" id="CHEBI:29033"/>
    </cofactor>
    <text evidence="2 4">Binds 1 Fe(2+) per subunit.</text>
</comment>
<comment type="activity regulation">
    <text evidence="2">Inhibited by L-N-acetylproline and by D-N-acetylproline.</text>
</comment>
<comment type="subunit">
    <text evidence="2">Homohexamer. Dimer of trimers.</text>
</comment>
<comment type="subcellular location">
    <subcellularLocation>
        <location evidence="5">Cytoplasm</location>
    </subcellularLocation>
</comment>
<comment type="similarity">
    <text evidence="6">Belongs to the TfdA dioxygenase family.</text>
</comment>
<feature type="chain" id="PRO_0000424199" description="(5R)-carbapenem-3-carboxylate synthase">
    <location>
        <begin position="1"/>
        <end position="273"/>
    </location>
</feature>
<feature type="binding site" evidence="2">
    <location>
        <position position="101"/>
    </location>
    <ligand>
        <name>Fe cation</name>
        <dbReference type="ChEBI" id="CHEBI:24875"/>
        <note>catalytic</note>
    </ligand>
</feature>
<feature type="binding site" evidence="2">
    <location>
        <position position="103"/>
    </location>
    <ligand>
        <name>Fe cation</name>
        <dbReference type="ChEBI" id="CHEBI:24875"/>
        <note>catalytic</note>
    </ligand>
</feature>
<feature type="binding site" evidence="1">
    <location>
        <position position="104"/>
    </location>
    <ligand>
        <name>substrate</name>
    </ligand>
</feature>
<feature type="binding site">
    <location>
        <position position="130"/>
    </location>
    <ligand>
        <name>2-oxoglutarate</name>
        <dbReference type="ChEBI" id="CHEBI:16810"/>
    </ligand>
</feature>
<feature type="binding site" evidence="2">
    <location>
        <position position="251"/>
    </location>
    <ligand>
        <name>Fe cation</name>
        <dbReference type="ChEBI" id="CHEBI:24875"/>
        <note>catalytic</note>
    </ligand>
</feature>
<feature type="binding site">
    <location>
        <position position="253"/>
    </location>
    <ligand>
        <name>2-oxoglutarate</name>
        <dbReference type="ChEBI" id="CHEBI:16810"/>
    </ligand>
</feature>
<feature type="binding site">
    <location>
        <position position="263"/>
    </location>
    <ligand>
        <name>2-oxoglutarate</name>
        <dbReference type="ChEBI" id="CHEBI:16810"/>
    </ligand>
</feature>
<feature type="binding site">
    <location>
        <position position="267"/>
    </location>
    <ligand>
        <name>2-oxoglutarate</name>
        <dbReference type="ChEBI" id="CHEBI:16810"/>
    </ligand>
</feature>
<feature type="strand" evidence="7">
    <location>
        <begin position="16"/>
        <end position="19"/>
    </location>
</feature>
<feature type="helix" evidence="7">
    <location>
        <begin position="21"/>
        <end position="26"/>
    </location>
</feature>
<feature type="helix" evidence="7">
    <location>
        <begin position="29"/>
        <end position="39"/>
    </location>
</feature>
<feature type="strand" evidence="7">
    <location>
        <begin position="41"/>
        <end position="44"/>
    </location>
</feature>
<feature type="helix" evidence="7">
    <location>
        <begin position="51"/>
        <end position="59"/>
    </location>
</feature>
<feature type="strand" evidence="7">
    <location>
        <begin position="62"/>
        <end position="64"/>
    </location>
</feature>
<feature type="helix" evidence="7">
    <location>
        <begin position="69"/>
        <end position="71"/>
    </location>
</feature>
<feature type="strand" evidence="7">
    <location>
        <begin position="81"/>
        <end position="84"/>
    </location>
</feature>
<feature type="strand" evidence="7">
    <location>
        <begin position="94"/>
        <end position="96"/>
    </location>
</feature>
<feature type="strand" evidence="7">
    <location>
        <begin position="98"/>
        <end position="101"/>
    </location>
</feature>
<feature type="helix" evidence="7">
    <location>
        <begin position="107"/>
        <end position="109"/>
    </location>
</feature>
<feature type="strand" evidence="7">
    <location>
        <begin position="112"/>
        <end position="123"/>
    </location>
</feature>
<feature type="strand" evidence="7">
    <location>
        <begin position="125"/>
        <end position="128"/>
    </location>
</feature>
<feature type="strand" evidence="7">
    <location>
        <begin position="130"/>
        <end position="133"/>
    </location>
</feature>
<feature type="helix" evidence="7">
    <location>
        <begin position="135"/>
        <end position="141"/>
    </location>
</feature>
<feature type="helix" evidence="7">
    <location>
        <begin position="144"/>
        <end position="152"/>
    </location>
</feature>
<feature type="strand" evidence="7">
    <location>
        <begin position="155"/>
        <end position="159"/>
    </location>
</feature>
<feature type="helix" evidence="7">
    <location>
        <begin position="162"/>
        <end position="165"/>
    </location>
</feature>
<feature type="turn" evidence="7">
    <location>
        <begin position="166"/>
        <end position="168"/>
    </location>
</feature>
<feature type="strand" evidence="7">
    <location>
        <begin position="178"/>
        <end position="181"/>
    </location>
</feature>
<feature type="strand" evidence="7">
    <location>
        <begin position="186"/>
        <end position="188"/>
    </location>
</feature>
<feature type="strand" evidence="7">
    <location>
        <begin position="201"/>
        <end position="206"/>
    </location>
</feature>
<feature type="helix" evidence="7">
    <location>
        <begin position="211"/>
        <end position="225"/>
    </location>
</feature>
<feature type="turn" evidence="7">
    <location>
        <begin position="228"/>
        <end position="230"/>
    </location>
</feature>
<feature type="strand" evidence="7">
    <location>
        <begin position="231"/>
        <end position="234"/>
    </location>
</feature>
<feature type="strand" evidence="7">
    <location>
        <begin position="241"/>
        <end position="245"/>
    </location>
</feature>
<feature type="turn" evidence="7">
    <location>
        <begin position="246"/>
        <end position="248"/>
    </location>
</feature>
<feature type="strand" evidence="7">
    <location>
        <begin position="250"/>
        <end position="253"/>
    </location>
</feature>
<feature type="strand" evidence="7">
    <location>
        <begin position="262"/>
        <end position="271"/>
    </location>
</feature>
<protein>
    <recommendedName>
        <fullName>(5R)-carbapenem-3-carboxylate synthase</fullName>
        <ecNumber>1.14.20.3</ecNumber>
    </recommendedName>
    <alternativeName>
        <fullName>Carbapenem synthase</fullName>
    </alternativeName>
</protein>
<gene>
    <name type="primary">carC</name>
</gene>